<protein>
    <recommendedName>
        <fullName>Putative ABC transporter ATP-binding protein gbs1680</fullName>
        <ecNumber>7.-.-.-</ecNumber>
    </recommendedName>
</protein>
<reference key="1">
    <citation type="journal article" date="2002" name="Mol. Microbiol.">
        <title>Genome sequence of Streptococcus agalactiae, a pathogen causing invasive neonatal disease.</title>
        <authorList>
            <person name="Glaser P."/>
            <person name="Rusniok C."/>
            <person name="Buchrieser C."/>
            <person name="Chevalier F."/>
            <person name="Frangeul L."/>
            <person name="Msadek T."/>
            <person name="Zouine M."/>
            <person name="Couve E."/>
            <person name="Lalioui L."/>
            <person name="Poyart C."/>
            <person name="Trieu-Cuot P."/>
            <person name="Kunst F."/>
        </authorList>
    </citation>
    <scope>NUCLEOTIDE SEQUENCE [LARGE SCALE GENOMIC DNA]</scope>
    <source>
        <strain>NEM316</strain>
    </source>
</reference>
<gene>
    <name type="ordered locus">gbs1680</name>
</gene>
<sequence length="558" mass="62662">MKDFIEWKDFTFQYDVQSEPTLKGINLSIPKGEKVLILGPSGSGKSTLGHCLNGIIPNTHKGQYSGIFTINHKNAFDLSIYDKSHLVSTVLQDPDGQFIGLTVAEDIAFALENDVVAQEEMTSIVEMWAKRLEIAPLLSKRPQDLSGGQKQRVSLAGVLVDDSPILLFDEPLANLDPQSGQDIMALVDRIHQEQDATTIIIEHRLEDVLYERVDRVVLFSDGQIIYNGEPDQLLKTNFLSEYGIREPLYISALKNLGYDFEKQNTMTSIDDFDFSELLIPKMRALDLDKHTDKLLSVQHLSVSYDLENNTLDDVSFDLYKGQRLAIVGKNGAGKSTLAKALCQFIPNNATLIYNNEDVSQDSIKERAERIGYVLQNPNQMISQAMVFDEVALGLRLRGFSDNDIESRVYDILKVCGLYQFRNWPISALSFGQKKRVTIASILILNPEVIILDEPTAGQDMKHYTEMMSFLDKLSCDGHSIVMITHDMQLMLEYTDRAIVIDNGLIAADDHPINILSNTELLKKTHLKKTSLFALADRLGISPQKLTQWYIDNQGGKNG</sequence>
<dbReference type="EC" id="7.-.-.-"/>
<dbReference type="EMBL" id="AL766852">
    <property type="protein sequence ID" value="CAD47339.1"/>
    <property type="molecule type" value="Genomic_DNA"/>
</dbReference>
<dbReference type="RefSeq" id="WP_000651256.1">
    <property type="nucleotide sequence ID" value="NC_004368.1"/>
</dbReference>
<dbReference type="SMR" id="Q8E3S6"/>
<dbReference type="KEGG" id="san:gbs1680"/>
<dbReference type="eggNOG" id="COG1122">
    <property type="taxonomic scope" value="Bacteria"/>
</dbReference>
<dbReference type="HOGENOM" id="CLU_000604_86_7_9"/>
<dbReference type="Proteomes" id="UP000000823">
    <property type="component" value="Chromosome"/>
</dbReference>
<dbReference type="GO" id="GO:0043190">
    <property type="term" value="C:ATP-binding cassette (ABC) transporter complex"/>
    <property type="evidence" value="ECO:0007669"/>
    <property type="project" value="TreeGrafter"/>
</dbReference>
<dbReference type="GO" id="GO:0005524">
    <property type="term" value="F:ATP binding"/>
    <property type="evidence" value="ECO:0007669"/>
    <property type="project" value="UniProtKB-KW"/>
</dbReference>
<dbReference type="GO" id="GO:0016887">
    <property type="term" value="F:ATP hydrolysis activity"/>
    <property type="evidence" value="ECO:0007669"/>
    <property type="project" value="InterPro"/>
</dbReference>
<dbReference type="GO" id="GO:0042626">
    <property type="term" value="F:ATPase-coupled transmembrane transporter activity"/>
    <property type="evidence" value="ECO:0007669"/>
    <property type="project" value="TreeGrafter"/>
</dbReference>
<dbReference type="CDD" id="cd03225">
    <property type="entry name" value="ABC_cobalt_CbiO_domain1"/>
    <property type="match status" value="2"/>
</dbReference>
<dbReference type="FunFam" id="3.40.50.300:FF:001422">
    <property type="entry name" value="Cobalt ABC transporter ATP-binding protein"/>
    <property type="match status" value="1"/>
</dbReference>
<dbReference type="FunFam" id="3.40.50.300:FF:000224">
    <property type="entry name" value="Energy-coupling factor transporter ATP-binding protein EcfA"/>
    <property type="match status" value="1"/>
</dbReference>
<dbReference type="Gene3D" id="3.40.50.300">
    <property type="entry name" value="P-loop containing nucleotide triphosphate hydrolases"/>
    <property type="match status" value="2"/>
</dbReference>
<dbReference type="InterPro" id="IPR003593">
    <property type="entry name" value="AAA+_ATPase"/>
</dbReference>
<dbReference type="InterPro" id="IPR022216">
    <property type="entry name" value="ABC_Co_transporter"/>
</dbReference>
<dbReference type="InterPro" id="IPR003439">
    <property type="entry name" value="ABC_transporter-like_ATP-bd"/>
</dbReference>
<dbReference type="InterPro" id="IPR017871">
    <property type="entry name" value="ABC_transporter-like_CS"/>
</dbReference>
<dbReference type="InterPro" id="IPR015856">
    <property type="entry name" value="ABC_transpr_CbiO/EcfA_su"/>
</dbReference>
<dbReference type="InterPro" id="IPR050095">
    <property type="entry name" value="ECF_ABC_transporter_ATP-bd"/>
</dbReference>
<dbReference type="InterPro" id="IPR027417">
    <property type="entry name" value="P-loop_NTPase"/>
</dbReference>
<dbReference type="NCBIfam" id="NF010167">
    <property type="entry name" value="PRK13648.1"/>
    <property type="match status" value="2"/>
</dbReference>
<dbReference type="PANTHER" id="PTHR43553:SF26">
    <property type="entry name" value="ABC TRANSPORTER ATP-BINDING PROTEIN BC_2655-RELATED"/>
    <property type="match status" value="1"/>
</dbReference>
<dbReference type="PANTHER" id="PTHR43553">
    <property type="entry name" value="HEAVY METAL TRANSPORTER"/>
    <property type="match status" value="1"/>
</dbReference>
<dbReference type="Pfam" id="PF00005">
    <property type="entry name" value="ABC_tran"/>
    <property type="match status" value="2"/>
</dbReference>
<dbReference type="Pfam" id="PF12558">
    <property type="entry name" value="DUF3744"/>
    <property type="match status" value="1"/>
</dbReference>
<dbReference type="SMART" id="SM00382">
    <property type="entry name" value="AAA"/>
    <property type="match status" value="2"/>
</dbReference>
<dbReference type="SUPFAM" id="SSF52540">
    <property type="entry name" value="P-loop containing nucleoside triphosphate hydrolases"/>
    <property type="match status" value="2"/>
</dbReference>
<dbReference type="PROSITE" id="PS00211">
    <property type="entry name" value="ABC_TRANSPORTER_1"/>
    <property type="match status" value="2"/>
</dbReference>
<dbReference type="PROSITE" id="PS50893">
    <property type="entry name" value="ABC_TRANSPORTER_2"/>
    <property type="match status" value="2"/>
</dbReference>
<proteinExistence type="inferred from homology"/>
<name>Y1680_STRA3</name>
<feature type="chain" id="PRO_0000092086" description="Putative ABC transporter ATP-binding protein gbs1680">
    <location>
        <begin position="1"/>
        <end position="558"/>
    </location>
</feature>
<feature type="domain" description="ABC transporter 1" evidence="2">
    <location>
        <begin position="5"/>
        <end position="246"/>
    </location>
</feature>
<feature type="domain" description="ABC transporter 2" evidence="2">
    <location>
        <begin position="295"/>
        <end position="527"/>
    </location>
</feature>
<feature type="binding site" evidence="2">
    <location>
        <begin position="39"/>
        <end position="46"/>
    </location>
    <ligand>
        <name>ATP</name>
        <dbReference type="ChEBI" id="CHEBI:30616"/>
        <label>1</label>
    </ligand>
</feature>
<feature type="binding site" evidence="2">
    <location>
        <begin position="328"/>
        <end position="335"/>
    </location>
    <ligand>
        <name>ATP</name>
        <dbReference type="ChEBI" id="CHEBI:30616"/>
        <label>2</label>
    </ligand>
</feature>
<comment type="function">
    <text evidence="1">Probably part of an ABC transporter complex. Responsible for energy coupling to the transport system (By similarity).</text>
</comment>
<comment type="subcellular location">
    <subcellularLocation>
        <location evidence="1">Cell membrane</location>
        <topology evidence="1">Peripheral membrane protein</topology>
    </subcellularLocation>
</comment>
<comment type="similarity">
    <text evidence="3">Belongs to the ABC transporter superfamily.</text>
</comment>
<keyword id="KW-0067">ATP-binding</keyword>
<keyword id="KW-1003">Cell membrane</keyword>
<keyword id="KW-0472">Membrane</keyword>
<keyword id="KW-0547">Nucleotide-binding</keyword>
<keyword id="KW-0677">Repeat</keyword>
<keyword id="KW-1278">Translocase</keyword>
<keyword id="KW-0813">Transport</keyword>
<organism>
    <name type="scientific">Streptococcus agalactiae serotype III (strain NEM316)</name>
    <dbReference type="NCBI Taxonomy" id="211110"/>
    <lineage>
        <taxon>Bacteria</taxon>
        <taxon>Bacillati</taxon>
        <taxon>Bacillota</taxon>
        <taxon>Bacilli</taxon>
        <taxon>Lactobacillales</taxon>
        <taxon>Streptococcaceae</taxon>
        <taxon>Streptococcus</taxon>
    </lineage>
</organism>
<evidence type="ECO:0000250" key="1"/>
<evidence type="ECO:0000255" key="2">
    <source>
        <dbReference type="PROSITE-ProRule" id="PRU00434"/>
    </source>
</evidence>
<evidence type="ECO:0000305" key="3"/>
<accession>Q8E3S6</accession>